<feature type="chain" id="PRO_0000371024" description="ATP synthase subunit delta">
    <location>
        <begin position="1"/>
        <end position="189"/>
    </location>
</feature>
<dbReference type="EMBL" id="CP001029">
    <property type="protein sequence ID" value="ACB79635.1"/>
    <property type="molecule type" value="Genomic_DNA"/>
</dbReference>
<dbReference type="RefSeq" id="WP_012453383.1">
    <property type="nucleotide sequence ID" value="NC_010725.1"/>
</dbReference>
<dbReference type="SMR" id="B1ZEF0"/>
<dbReference type="STRING" id="441620.Mpop_1468"/>
<dbReference type="KEGG" id="mpo:Mpop_1468"/>
<dbReference type="eggNOG" id="COG0712">
    <property type="taxonomic scope" value="Bacteria"/>
</dbReference>
<dbReference type="HOGENOM" id="CLU_085114_0_1_5"/>
<dbReference type="OrthoDB" id="9796185at2"/>
<dbReference type="Proteomes" id="UP000007136">
    <property type="component" value="Chromosome"/>
</dbReference>
<dbReference type="GO" id="GO:0005886">
    <property type="term" value="C:plasma membrane"/>
    <property type="evidence" value="ECO:0007669"/>
    <property type="project" value="UniProtKB-SubCell"/>
</dbReference>
<dbReference type="GO" id="GO:0045259">
    <property type="term" value="C:proton-transporting ATP synthase complex"/>
    <property type="evidence" value="ECO:0007669"/>
    <property type="project" value="UniProtKB-KW"/>
</dbReference>
<dbReference type="GO" id="GO:0046933">
    <property type="term" value="F:proton-transporting ATP synthase activity, rotational mechanism"/>
    <property type="evidence" value="ECO:0007669"/>
    <property type="project" value="UniProtKB-UniRule"/>
</dbReference>
<dbReference type="Gene3D" id="1.10.520.20">
    <property type="entry name" value="N-terminal domain of the delta subunit of the F1F0-ATP synthase"/>
    <property type="match status" value="1"/>
</dbReference>
<dbReference type="HAMAP" id="MF_01416">
    <property type="entry name" value="ATP_synth_delta_bact"/>
    <property type="match status" value="1"/>
</dbReference>
<dbReference type="InterPro" id="IPR026015">
    <property type="entry name" value="ATP_synth_OSCP/delta_N_sf"/>
</dbReference>
<dbReference type="InterPro" id="IPR020781">
    <property type="entry name" value="ATPase_OSCP/d_CS"/>
</dbReference>
<dbReference type="InterPro" id="IPR000711">
    <property type="entry name" value="ATPase_OSCP/dsu"/>
</dbReference>
<dbReference type="NCBIfam" id="TIGR01145">
    <property type="entry name" value="ATP_synt_delta"/>
    <property type="match status" value="1"/>
</dbReference>
<dbReference type="NCBIfam" id="NF004406">
    <property type="entry name" value="PRK05758.3-2"/>
    <property type="match status" value="1"/>
</dbReference>
<dbReference type="PANTHER" id="PTHR11910">
    <property type="entry name" value="ATP SYNTHASE DELTA CHAIN"/>
    <property type="match status" value="1"/>
</dbReference>
<dbReference type="Pfam" id="PF00213">
    <property type="entry name" value="OSCP"/>
    <property type="match status" value="1"/>
</dbReference>
<dbReference type="PRINTS" id="PR00125">
    <property type="entry name" value="ATPASEDELTA"/>
</dbReference>
<dbReference type="SUPFAM" id="SSF47928">
    <property type="entry name" value="N-terminal domain of the delta subunit of the F1F0-ATP synthase"/>
    <property type="match status" value="1"/>
</dbReference>
<dbReference type="PROSITE" id="PS00389">
    <property type="entry name" value="ATPASE_DELTA"/>
    <property type="match status" value="1"/>
</dbReference>
<name>ATPD_METPB</name>
<comment type="function">
    <text evidence="1">F(1)F(0) ATP synthase produces ATP from ADP in the presence of a proton or sodium gradient. F-type ATPases consist of two structural domains, F(1) containing the extramembraneous catalytic core and F(0) containing the membrane proton channel, linked together by a central stalk and a peripheral stalk. During catalysis, ATP synthesis in the catalytic domain of F(1) is coupled via a rotary mechanism of the central stalk subunits to proton translocation.</text>
</comment>
<comment type="function">
    <text evidence="1">This protein is part of the stalk that links CF(0) to CF(1). It either transmits conformational changes from CF(0) to CF(1) or is implicated in proton conduction.</text>
</comment>
<comment type="subunit">
    <text evidence="1">F-type ATPases have 2 components, F(1) - the catalytic core - and F(0) - the membrane proton channel. F(1) has five subunits: alpha(3), beta(3), gamma(1), delta(1), epsilon(1). F(0) has three main subunits: a(1), b(2) and c(10-14). The alpha and beta chains form an alternating ring which encloses part of the gamma chain. F(1) is attached to F(0) by a central stalk formed by the gamma and epsilon chains, while a peripheral stalk is formed by the delta and b chains.</text>
</comment>
<comment type="subcellular location">
    <subcellularLocation>
        <location evidence="1">Cell inner membrane</location>
        <topology evidence="1">Peripheral membrane protein</topology>
    </subcellularLocation>
</comment>
<comment type="similarity">
    <text evidence="1">Belongs to the ATPase delta chain family.</text>
</comment>
<reference key="1">
    <citation type="submission" date="2008-04" db="EMBL/GenBank/DDBJ databases">
        <title>Complete sequence of chromosome of Methylobacterium populi BJ001.</title>
        <authorList>
            <consortium name="US DOE Joint Genome Institute"/>
            <person name="Copeland A."/>
            <person name="Lucas S."/>
            <person name="Lapidus A."/>
            <person name="Glavina del Rio T."/>
            <person name="Dalin E."/>
            <person name="Tice H."/>
            <person name="Bruce D."/>
            <person name="Goodwin L."/>
            <person name="Pitluck S."/>
            <person name="Chertkov O."/>
            <person name="Brettin T."/>
            <person name="Detter J.C."/>
            <person name="Han C."/>
            <person name="Kuske C.R."/>
            <person name="Schmutz J."/>
            <person name="Larimer F."/>
            <person name="Land M."/>
            <person name="Hauser L."/>
            <person name="Kyrpides N."/>
            <person name="Mikhailova N."/>
            <person name="Marx C."/>
            <person name="Richardson P."/>
        </authorList>
    </citation>
    <scope>NUCLEOTIDE SEQUENCE [LARGE SCALE GENOMIC DNA]</scope>
    <source>
        <strain>ATCC BAA-705 / NCIMB 13946 / BJ001</strain>
    </source>
</reference>
<accession>B1ZEF0</accession>
<sequence>MAQNGSEGPLLAGVAGRYALALYELARDEGQVDDVAKNLDAFDALYRESADLRRLVKSPAFSAEEQTAAVGALLDRAGISGLAANFIKLSAANRRLFALPDMIRAYREKVREAKGIVRAEVRVAEKPSDAVIEDIKASLRDVAKSEVDIDLHIDPSLIGGIVVKMGSRMVDASLRTKLNSIRLAMREAR</sequence>
<organism>
    <name type="scientific">Methylorubrum populi (strain ATCC BAA-705 / NCIMB 13946 / BJ001)</name>
    <name type="common">Methylobacterium populi</name>
    <dbReference type="NCBI Taxonomy" id="441620"/>
    <lineage>
        <taxon>Bacteria</taxon>
        <taxon>Pseudomonadati</taxon>
        <taxon>Pseudomonadota</taxon>
        <taxon>Alphaproteobacteria</taxon>
        <taxon>Hyphomicrobiales</taxon>
        <taxon>Methylobacteriaceae</taxon>
        <taxon>Methylorubrum</taxon>
    </lineage>
</organism>
<gene>
    <name evidence="1" type="primary">atpH</name>
    <name type="ordered locus">Mpop_1468</name>
</gene>
<proteinExistence type="inferred from homology"/>
<protein>
    <recommendedName>
        <fullName evidence="1">ATP synthase subunit delta</fullName>
    </recommendedName>
    <alternativeName>
        <fullName evidence="1">ATP synthase F(1) sector subunit delta</fullName>
    </alternativeName>
    <alternativeName>
        <fullName evidence="1">F-type ATPase subunit delta</fullName>
        <shortName evidence="1">F-ATPase subunit delta</shortName>
    </alternativeName>
</protein>
<evidence type="ECO:0000255" key="1">
    <source>
        <dbReference type="HAMAP-Rule" id="MF_01416"/>
    </source>
</evidence>
<keyword id="KW-0066">ATP synthesis</keyword>
<keyword id="KW-0997">Cell inner membrane</keyword>
<keyword id="KW-1003">Cell membrane</keyword>
<keyword id="KW-0139">CF(1)</keyword>
<keyword id="KW-0375">Hydrogen ion transport</keyword>
<keyword id="KW-0406">Ion transport</keyword>
<keyword id="KW-0472">Membrane</keyword>
<keyword id="KW-0813">Transport</keyword>